<evidence type="ECO:0000250" key="1"/>
<evidence type="ECO:0000305" key="2"/>
<sequence length="116" mass="12705">MYEQAIVIRNDLKMGKGKMAAQACHASIQAFLHAQKISSSAVSGWMNEGQKKVVLKVNSEKELLEIFKNVNIEGLPCSLIRDAGRTQIEPGSLTAVGIGPEKEEKISKVKKDLKLL</sequence>
<accession>P61234</accession>
<comment type="function">
    <text evidence="1">The natural substrate for this enzyme may be peptidyl-tRNAs which drop off the ribosome during protein synthesis.</text>
</comment>
<comment type="catalytic activity">
    <reaction>
        <text>an N-acyl-L-alpha-aminoacyl-tRNA + H2O = an N-acyl-L-amino acid + a tRNA + H(+)</text>
        <dbReference type="Rhea" id="RHEA:54448"/>
        <dbReference type="Rhea" id="RHEA-COMP:10123"/>
        <dbReference type="Rhea" id="RHEA-COMP:13883"/>
        <dbReference type="ChEBI" id="CHEBI:15377"/>
        <dbReference type="ChEBI" id="CHEBI:15378"/>
        <dbReference type="ChEBI" id="CHEBI:59874"/>
        <dbReference type="ChEBI" id="CHEBI:78442"/>
        <dbReference type="ChEBI" id="CHEBI:138191"/>
        <dbReference type="EC" id="3.1.1.29"/>
    </reaction>
</comment>
<comment type="subcellular location">
    <subcellularLocation>
        <location evidence="1">Cytoplasm</location>
    </subcellularLocation>
</comment>
<comment type="similarity">
    <text evidence="2">Belongs to the PTH2 family.</text>
</comment>
<reference key="1">
    <citation type="journal article" date="2004" name="J. Bacteriol.">
        <title>Complete genome sequence of the genetically tractable hydrogenotrophic methanogen Methanococcus maripaludis.</title>
        <authorList>
            <person name="Hendrickson E.L."/>
            <person name="Kaul R."/>
            <person name="Zhou Y."/>
            <person name="Bovee D."/>
            <person name="Chapman P."/>
            <person name="Chung J."/>
            <person name="Conway de Macario E."/>
            <person name="Dodsworth J.A."/>
            <person name="Gillett W."/>
            <person name="Graham D.E."/>
            <person name="Hackett M."/>
            <person name="Haydock A.K."/>
            <person name="Kang A."/>
            <person name="Land M.L."/>
            <person name="Levy R."/>
            <person name="Lie T.J."/>
            <person name="Major T.A."/>
            <person name="Moore B.C."/>
            <person name="Porat I."/>
            <person name="Palmeiri A."/>
            <person name="Rouse G."/>
            <person name="Saenphimmachak C."/>
            <person name="Soell D."/>
            <person name="Van Dien S."/>
            <person name="Wang T."/>
            <person name="Whitman W.B."/>
            <person name="Xia Q."/>
            <person name="Zhang Y."/>
            <person name="Larimer F.W."/>
            <person name="Olson M.V."/>
            <person name="Leigh J.A."/>
        </authorList>
    </citation>
    <scope>NUCLEOTIDE SEQUENCE [LARGE SCALE GENOMIC DNA]</scope>
    <source>
        <strain>DSM 14266 / JCM 13030 / NBRC 101832 / S2 / LL</strain>
    </source>
</reference>
<organism>
    <name type="scientific">Methanococcus maripaludis (strain DSM 14266 / JCM 13030 / NBRC 101832 / S2 / LL)</name>
    <dbReference type="NCBI Taxonomy" id="267377"/>
    <lineage>
        <taxon>Archaea</taxon>
        <taxon>Methanobacteriati</taxon>
        <taxon>Methanobacteriota</taxon>
        <taxon>Methanomada group</taxon>
        <taxon>Methanococci</taxon>
        <taxon>Methanococcales</taxon>
        <taxon>Methanococcaceae</taxon>
        <taxon>Methanococcus</taxon>
    </lineage>
</organism>
<keyword id="KW-0963">Cytoplasm</keyword>
<keyword id="KW-0378">Hydrolase</keyword>
<keyword id="KW-1185">Reference proteome</keyword>
<gene>
    <name type="primary">pth</name>
    <name type="ordered locus">MMP0609</name>
</gene>
<proteinExistence type="inferred from homology"/>
<dbReference type="EC" id="3.1.1.29"/>
<dbReference type="EMBL" id="BX950229">
    <property type="protein sequence ID" value="CAF30165.1"/>
    <property type="molecule type" value="Genomic_DNA"/>
</dbReference>
<dbReference type="RefSeq" id="WP_011170553.1">
    <property type="nucleotide sequence ID" value="NC_005791.1"/>
</dbReference>
<dbReference type="SMR" id="P61234"/>
<dbReference type="STRING" id="267377.MMP0609"/>
<dbReference type="EnsemblBacteria" id="CAF30165">
    <property type="protein sequence ID" value="CAF30165"/>
    <property type="gene ID" value="MMP0609"/>
</dbReference>
<dbReference type="GeneID" id="2762305"/>
<dbReference type="KEGG" id="mmp:MMP0609"/>
<dbReference type="PATRIC" id="fig|267377.15.peg.623"/>
<dbReference type="eggNOG" id="arCOG04228">
    <property type="taxonomic scope" value="Archaea"/>
</dbReference>
<dbReference type="HOGENOM" id="CLU_073661_2_2_2"/>
<dbReference type="OrthoDB" id="6075at2157"/>
<dbReference type="Proteomes" id="UP000000590">
    <property type="component" value="Chromosome"/>
</dbReference>
<dbReference type="GO" id="GO:0005829">
    <property type="term" value="C:cytosol"/>
    <property type="evidence" value="ECO:0007669"/>
    <property type="project" value="TreeGrafter"/>
</dbReference>
<dbReference type="GO" id="GO:0004045">
    <property type="term" value="F:peptidyl-tRNA hydrolase activity"/>
    <property type="evidence" value="ECO:0007669"/>
    <property type="project" value="UniProtKB-UniRule"/>
</dbReference>
<dbReference type="GO" id="GO:0006412">
    <property type="term" value="P:translation"/>
    <property type="evidence" value="ECO:0007669"/>
    <property type="project" value="UniProtKB-UniRule"/>
</dbReference>
<dbReference type="CDD" id="cd02430">
    <property type="entry name" value="PTH2"/>
    <property type="match status" value="1"/>
</dbReference>
<dbReference type="FunFam" id="3.40.1490.10:FF:000001">
    <property type="entry name" value="Peptidyl-tRNA hydrolase 2"/>
    <property type="match status" value="1"/>
</dbReference>
<dbReference type="Gene3D" id="3.40.1490.10">
    <property type="entry name" value="Bit1"/>
    <property type="match status" value="1"/>
</dbReference>
<dbReference type="HAMAP" id="MF_00628">
    <property type="entry name" value="Pept_tRNA_hydro_arch"/>
    <property type="match status" value="1"/>
</dbReference>
<dbReference type="InterPro" id="IPR023476">
    <property type="entry name" value="Pep_tRNA_hydro_II_dom_sf"/>
</dbReference>
<dbReference type="InterPro" id="IPR034759">
    <property type="entry name" value="Pept_tRNA_hydro_arch"/>
</dbReference>
<dbReference type="InterPro" id="IPR002833">
    <property type="entry name" value="PTH2"/>
</dbReference>
<dbReference type="NCBIfam" id="TIGR00283">
    <property type="entry name" value="arch_pth2"/>
    <property type="match status" value="1"/>
</dbReference>
<dbReference type="NCBIfam" id="NF003314">
    <property type="entry name" value="PRK04322.1"/>
    <property type="match status" value="1"/>
</dbReference>
<dbReference type="PANTHER" id="PTHR12649">
    <property type="entry name" value="PEPTIDYL-TRNA HYDROLASE 2"/>
    <property type="match status" value="1"/>
</dbReference>
<dbReference type="PANTHER" id="PTHR12649:SF11">
    <property type="entry name" value="PEPTIDYL-TRNA HYDROLASE 2, MITOCHONDRIAL"/>
    <property type="match status" value="1"/>
</dbReference>
<dbReference type="Pfam" id="PF01981">
    <property type="entry name" value="PTH2"/>
    <property type="match status" value="1"/>
</dbReference>
<dbReference type="SUPFAM" id="SSF102462">
    <property type="entry name" value="Peptidyl-tRNA hydrolase II"/>
    <property type="match status" value="1"/>
</dbReference>
<protein>
    <recommendedName>
        <fullName>Peptidyl-tRNA hydrolase</fullName>
        <shortName>PTH</shortName>
        <ecNumber>3.1.1.29</ecNumber>
    </recommendedName>
</protein>
<name>PTH_METMP</name>
<feature type="chain" id="PRO_0000120295" description="Peptidyl-tRNA hydrolase">
    <location>
        <begin position="1"/>
        <end position="116"/>
    </location>
</feature>